<comment type="function">
    <text evidence="1">Component of the ERMES/MDM complex, which serves as a molecular tether to connect the endoplasmic reticulum and mitochondria. Components of this complex are involved in the control of mitochondrial shape and protein biogenesis and may function in phospholipid exchange. mdm10 is involved in the late assembly steps of the general translocase of the mitochondrial outer membrane (TOM complex). Functions in the tom40-specific route of the assembly of outer membrane beta-barrel proteins, including the association of tom40 with the receptor tom22 and small TOM proteins. Can associate with the SAM(core) complex as well as the mdm12-mmm1 complex, both involved in late steps of the major beta-barrel assembly pathway, that is responsible for biogenesis of all outer membrane beta-barrel proteins. May act as a switch that shuttles between both complexes and channels precursor proteins into the tom40-specific pathway. Plays a role in mitochondrial morphology and in the inheritance of mitochondria.</text>
</comment>
<comment type="subunit">
    <text evidence="1">Component of the ER-mitochondria encounter structure (ERMES) or MDM complex, composed of mmm1, mdm10, mdm12 and mdm34. Associates with the mitochondrial outer membrane sorting assembly machinery SAM(core) complex.</text>
</comment>
<comment type="subcellular location">
    <subcellularLocation>
        <location evidence="1">Mitochondrion outer membrane</location>
        <topology evidence="1">Multi-pass membrane protein</topology>
    </subcellularLocation>
    <text evidence="1">The ERMES/MDM complex localizes to a few discrete foci (around 10 per single cell), that represent mitochondria-endoplasmic reticulum junctions. These foci are often found next to mtDNA nucleoids.</text>
</comment>
<comment type="domain">
    <text>Lacks alpha-helical transmembrane segments, suggesting that it resides in the membrane via beta-sheet conformations similar to those predicted for other outer membrane proteins and porin.</text>
</comment>
<comment type="similarity">
    <text evidence="1">Belongs to the MDM10 family.</text>
</comment>
<organism>
    <name type="scientific">Neosartorya fischeri (strain ATCC 1020 / DSM 3700 / CBS 544.65 / FGSC A1164 / JCM 1740 / NRRL 181 / WB 181)</name>
    <name type="common">Aspergillus fischerianus</name>
    <dbReference type="NCBI Taxonomy" id="331117"/>
    <lineage>
        <taxon>Eukaryota</taxon>
        <taxon>Fungi</taxon>
        <taxon>Dikarya</taxon>
        <taxon>Ascomycota</taxon>
        <taxon>Pezizomycotina</taxon>
        <taxon>Eurotiomycetes</taxon>
        <taxon>Eurotiomycetidae</taxon>
        <taxon>Eurotiales</taxon>
        <taxon>Aspergillaceae</taxon>
        <taxon>Aspergillus</taxon>
        <taxon>Aspergillus subgen. Fumigati</taxon>
    </lineage>
</organism>
<gene>
    <name type="primary">mdmB</name>
    <name type="synonym">mdm10</name>
    <name type="ORF">NFIA_073600</name>
</gene>
<accession>A1DDI7</accession>
<feature type="chain" id="PRO_0000384186" description="Mitochondrial distribution and morphology protein 10">
    <location>
        <begin position="1"/>
        <end position="471"/>
    </location>
</feature>
<feature type="region of interest" description="Disordered" evidence="2">
    <location>
        <begin position="272"/>
        <end position="291"/>
    </location>
</feature>
<feature type="region of interest" description="Disordered" evidence="2">
    <location>
        <begin position="374"/>
        <end position="394"/>
    </location>
</feature>
<feature type="region of interest" description="Disordered" evidence="2">
    <location>
        <begin position="436"/>
        <end position="455"/>
    </location>
</feature>
<feature type="compositionally biased region" description="Low complexity" evidence="2">
    <location>
        <begin position="276"/>
        <end position="288"/>
    </location>
</feature>
<feature type="compositionally biased region" description="Gly residues" evidence="2">
    <location>
        <begin position="444"/>
        <end position="455"/>
    </location>
</feature>
<proteinExistence type="inferred from homology"/>
<protein>
    <recommendedName>
        <fullName evidence="1">Mitochondrial distribution and morphology protein 10</fullName>
    </recommendedName>
    <alternativeName>
        <fullName evidence="1">Mitochondrial inheritance component mdm10</fullName>
    </alternativeName>
</protein>
<sequence length="471" mass="50729">MLDFMDYIQLAFAEATNWNRDNSYSFLTATAQSLLDFSTPERLRVHLSSLATPHFATSYTLGTVGLIDGSVSYLYSTVPLNNTPSRSALIPLRKLARGYRQVQPPVAPVEDWGWQSLLGGLGSSESKPSGNGDSQPSLGRKATLLNATLHLPPPTTLNALFLRRISPTMQLSLAVCSTRGAPLSNSAPQASLLGQLSHDTGKYSNEYLFSTDNSLFGWRGLWNFGPDPRHPKENPSPRLSLLSAGAEAYYSPVSSLIGMSTGLRFSTLPAATEMPSSSSSTSSTTTTSNHGTPISTFPYTLTLVLTPLTGSLSTTYSLRASPNLAFSSRFGFNVYSWESEMVAGCELWRKRRKSSPPPVDDDGLEWARRKMRMADTPGVPPVEPPSTHNRDEENESVLKIRVDQSWNVRLLWEGRVKELLVSAGVGLGPSSFSSSSWAANSTAAGGGQSVGGGVSGKSYWHGVGVSVSYSS</sequence>
<dbReference type="EMBL" id="DS027696">
    <property type="protein sequence ID" value="EAW17444.1"/>
    <property type="molecule type" value="Genomic_DNA"/>
</dbReference>
<dbReference type="RefSeq" id="XP_001259341.1">
    <property type="nucleotide sequence ID" value="XM_001259340.1"/>
</dbReference>
<dbReference type="SMR" id="A1DDI7"/>
<dbReference type="STRING" id="331117.A1DDI7"/>
<dbReference type="EnsemblFungi" id="EAW17444">
    <property type="protein sequence ID" value="EAW17444"/>
    <property type="gene ID" value="NFIA_073600"/>
</dbReference>
<dbReference type="GeneID" id="4586395"/>
<dbReference type="KEGG" id="nfi:NFIA_073600"/>
<dbReference type="VEuPathDB" id="FungiDB:NFIA_073600"/>
<dbReference type="eggNOG" id="ENOG502QUN5">
    <property type="taxonomic scope" value="Eukaryota"/>
</dbReference>
<dbReference type="HOGENOM" id="CLU_026505_1_0_1"/>
<dbReference type="OMA" id="VPGYRQI"/>
<dbReference type="OrthoDB" id="2103793at2759"/>
<dbReference type="Proteomes" id="UP000006702">
    <property type="component" value="Unassembled WGS sequence"/>
</dbReference>
<dbReference type="GO" id="GO:0032865">
    <property type="term" value="C:ERMES complex"/>
    <property type="evidence" value="ECO:0007669"/>
    <property type="project" value="UniProtKB-UniRule"/>
</dbReference>
<dbReference type="GO" id="GO:0001401">
    <property type="term" value="C:SAM complex"/>
    <property type="evidence" value="ECO:0007669"/>
    <property type="project" value="TreeGrafter"/>
</dbReference>
<dbReference type="GO" id="GO:0051654">
    <property type="term" value="P:establishment of mitochondrion localization"/>
    <property type="evidence" value="ECO:0007669"/>
    <property type="project" value="TreeGrafter"/>
</dbReference>
<dbReference type="GO" id="GO:0000002">
    <property type="term" value="P:mitochondrial genome maintenance"/>
    <property type="evidence" value="ECO:0007669"/>
    <property type="project" value="UniProtKB-UniRule"/>
</dbReference>
<dbReference type="GO" id="GO:0070096">
    <property type="term" value="P:mitochondrial outer membrane translocase complex assembly"/>
    <property type="evidence" value="ECO:0007669"/>
    <property type="project" value="UniProtKB-UniRule"/>
</dbReference>
<dbReference type="GO" id="GO:1990456">
    <property type="term" value="P:mitochondrion-endoplasmic reticulum membrane tethering"/>
    <property type="evidence" value="ECO:0007669"/>
    <property type="project" value="UniProtKB-UniRule"/>
</dbReference>
<dbReference type="GO" id="GO:0015914">
    <property type="term" value="P:phospholipid transport"/>
    <property type="evidence" value="ECO:0007669"/>
    <property type="project" value="TreeGrafter"/>
</dbReference>
<dbReference type="GO" id="GO:0045040">
    <property type="term" value="P:protein insertion into mitochondrial outer membrane"/>
    <property type="evidence" value="ECO:0007669"/>
    <property type="project" value="UniProtKB-UniRule"/>
</dbReference>
<dbReference type="HAMAP" id="MF_03102">
    <property type="entry name" value="Mdm10"/>
    <property type="match status" value="1"/>
</dbReference>
<dbReference type="InterPro" id="IPR027539">
    <property type="entry name" value="Mdm10"/>
</dbReference>
<dbReference type="PANTHER" id="PTHR28035">
    <property type="entry name" value="MITOCHONDRIAL DISTRIBUTION AND MORPHOLOGY PROTEIN 10"/>
    <property type="match status" value="1"/>
</dbReference>
<dbReference type="PANTHER" id="PTHR28035:SF1">
    <property type="entry name" value="MITOCHONDRIAL DISTRIBUTION AND MORPHOLOGY PROTEIN 10"/>
    <property type="match status" value="1"/>
</dbReference>
<dbReference type="Pfam" id="PF12519">
    <property type="entry name" value="MDM10"/>
    <property type="match status" value="2"/>
</dbReference>
<name>MDM10_NEOFI</name>
<keyword id="KW-0472">Membrane</keyword>
<keyword id="KW-0496">Mitochondrion</keyword>
<keyword id="KW-1000">Mitochondrion outer membrane</keyword>
<keyword id="KW-1185">Reference proteome</keyword>
<keyword id="KW-0812">Transmembrane</keyword>
<keyword id="KW-1134">Transmembrane beta strand</keyword>
<evidence type="ECO:0000255" key="1">
    <source>
        <dbReference type="HAMAP-Rule" id="MF_03102"/>
    </source>
</evidence>
<evidence type="ECO:0000256" key="2">
    <source>
        <dbReference type="SAM" id="MobiDB-lite"/>
    </source>
</evidence>
<reference key="1">
    <citation type="journal article" date="2008" name="PLoS Genet.">
        <title>Genomic islands in the pathogenic filamentous fungus Aspergillus fumigatus.</title>
        <authorList>
            <person name="Fedorova N.D."/>
            <person name="Khaldi N."/>
            <person name="Joardar V.S."/>
            <person name="Maiti R."/>
            <person name="Amedeo P."/>
            <person name="Anderson M.J."/>
            <person name="Crabtree J."/>
            <person name="Silva J.C."/>
            <person name="Badger J.H."/>
            <person name="Albarraq A."/>
            <person name="Angiuoli S."/>
            <person name="Bussey H."/>
            <person name="Bowyer P."/>
            <person name="Cotty P.J."/>
            <person name="Dyer P.S."/>
            <person name="Egan A."/>
            <person name="Galens K."/>
            <person name="Fraser-Liggett C.M."/>
            <person name="Haas B.J."/>
            <person name="Inman J.M."/>
            <person name="Kent R."/>
            <person name="Lemieux S."/>
            <person name="Malavazi I."/>
            <person name="Orvis J."/>
            <person name="Roemer T."/>
            <person name="Ronning C.M."/>
            <person name="Sundaram J.P."/>
            <person name="Sutton G."/>
            <person name="Turner G."/>
            <person name="Venter J.C."/>
            <person name="White O.R."/>
            <person name="Whitty B.R."/>
            <person name="Youngman P."/>
            <person name="Wolfe K.H."/>
            <person name="Goldman G.H."/>
            <person name="Wortman J.R."/>
            <person name="Jiang B."/>
            <person name="Denning D.W."/>
            <person name="Nierman W.C."/>
        </authorList>
    </citation>
    <scope>NUCLEOTIDE SEQUENCE [LARGE SCALE GENOMIC DNA]</scope>
    <source>
        <strain>ATCC 1020 / DSM 3700 / CBS 544.65 / FGSC A1164 / JCM 1740 / NRRL 181 / WB 181</strain>
    </source>
</reference>